<proteinExistence type="predicted"/>
<name>YYAK_BACSU</name>
<gene>
    <name type="primary">yyaK</name>
    <name type="ordered locus">BSU40830</name>
</gene>
<accession>P37513</accession>
<protein>
    <recommendedName>
        <fullName>Uncharacterized protein YyaK</fullName>
    </recommendedName>
</protein>
<dbReference type="EMBL" id="D26185">
    <property type="protein sequence ID" value="BAA05213.1"/>
    <property type="molecule type" value="Genomic_DNA"/>
</dbReference>
<dbReference type="EMBL" id="AL009126">
    <property type="protein sequence ID" value="CAB16120.1"/>
    <property type="molecule type" value="Genomic_DNA"/>
</dbReference>
<dbReference type="PIR" id="S66007">
    <property type="entry name" value="S66007"/>
</dbReference>
<dbReference type="RefSeq" id="NP_391963.1">
    <property type="nucleotide sequence ID" value="NC_000964.3"/>
</dbReference>
<dbReference type="RefSeq" id="WP_003244361.1">
    <property type="nucleotide sequence ID" value="NZ_OZ025638.1"/>
</dbReference>
<dbReference type="FunCoup" id="P37513">
    <property type="interactions" value="6"/>
</dbReference>
<dbReference type="STRING" id="224308.BSU40830"/>
<dbReference type="PaxDb" id="224308-BSU40830"/>
<dbReference type="EnsemblBacteria" id="CAB16120">
    <property type="protein sequence ID" value="CAB16120"/>
    <property type="gene ID" value="BSU_40830"/>
</dbReference>
<dbReference type="GeneID" id="937893"/>
<dbReference type="KEGG" id="bsu:BSU40830"/>
<dbReference type="PATRIC" id="fig|224308.179.peg.4424"/>
<dbReference type="eggNOG" id="COG1266">
    <property type="taxonomic scope" value="Bacteria"/>
</dbReference>
<dbReference type="InParanoid" id="P37513"/>
<dbReference type="OrthoDB" id="2806188at2"/>
<dbReference type="BioCyc" id="BSUB:BSU40830-MONOMER"/>
<dbReference type="Proteomes" id="UP000001570">
    <property type="component" value="Chromosome"/>
</dbReference>
<dbReference type="GO" id="GO:0004175">
    <property type="term" value="F:endopeptidase activity"/>
    <property type="evidence" value="ECO:0007669"/>
    <property type="project" value="UniProtKB-ARBA"/>
</dbReference>
<dbReference type="GO" id="GO:0080120">
    <property type="term" value="P:CAAX-box protein maturation"/>
    <property type="evidence" value="ECO:0007669"/>
    <property type="project" value="UniProtKB-ARBA"/>
</dbReference>
<dbReference type="InterPro" id="IPR003675">
    <property type="entry name" value="Rce1/LyrA-like_dom"/>
</dbReference>
<dbReference type="Pfam" id="PF02517">
    <property type="entry name" value="Rce1-like"/>
    <property type="match status" value="1"/>
</dbReference>
<organism>
    <name type="scientific">Bacillus subtilis (strain 168)</name>
    <dbReference type="NCBI Taxonomy" id="224308"/>
    <lineage>
        <taxon>Bacteria</taxon>
        <taxon>Bacillati</taxon>
        <taxon>Bacillota</taxon>
        <taxon>Bacilli</taxon>
        <taxon>Bacillales</taxon>
        <taxon>Bacillaceae</taxon>
        <taxon>Bacillus</taxon>
    </lineage>
</organism>
<sequence length="299" mass="34007">MNSFIRPIEGNNTLWRYFFAFLVMVGLYVLGNIAYLFAILFTVIVNPNITFDLDEAVLSDPLVDLYLSHVIYLFAIPGVWLAVRFILKRPFRTVITPNSKMNWRRISFGFIAYFLLMIAVQLIDFVIHPDSYSMQEFNASRFIWLLAAALILVPIQTSAEELFFRGFLLQAFGRLTKNPLFLTLIVGGLFGVLHFANPEMNNGAVWAGIEYLTFGFVWTYYTIKTGSIEISLGAHAANNMFLCMFITEKNSVYGGIPSLFTVTRGNPMWEAFFTIAVNLVFAGIALWYHKKSKSKQQGS</sequence>
<feature type="chain" id="PRO_0000050053" description="Uncharacterized protein YyaK">
    <location>
        <begin position="1"/>
        <end position="299"/>
    </location>
</feature>
<keyword id="KW-1185">Reference proteome</keyword>
<reference key="1">
    <citation type="journal article" date="1994" name="DNA Res.">
        <title>Systematic sequencing of the 180 kilobase region of the Bacillus subtilis chromosome containing the replication origin.</title>
        <authorList>
            <person name="Ogasawara N."/>
            <person name="Nakai S."/>
            <person name="Yoshikawa H."/>
        </authorList>
    </citation>
    <scope>NUCLEOTIDE SEQUENCE [GENOMIC DNA]</scope>
    <source>
        <strain>168</strain>
    </source>
</reference>
<reference key="2">
    <citation type="journal article" date="1997" name="Nature">
        <title>The complete genome sequence of the Gram-positive bacterium Bacillus subtilis.</title>
        <authorList>
            <person name="Kunst F."/>
            <person name="Ogasawara N."/>
            <person name="Moszer I."/>
            <person name="Albertini A.M."/>
            <person name="Alloni G."/>
            <person name="Azevedo V."/>
            <person name="Bertero M.G."/>
            <person name="Bessieres P."/>
            <person name="Bolotin A."/>
            <person name="Borchert S."/>
            <person name="Borriss R."/>
            <person name="Boursier L."/>
            <person name="Brans A."/>
            <person name="Braun M."/>
            <person name="Brignell S.C."/>
            <person name="Bron S."/>
            <person name="Brouillet S."/>
            <person name="Bruschi C.V."/>
            <person name="Caldwell B."/>
            <person name="Capuano V."/>
            <person name="Carter N.M."/>
            <person name="Choi S.-K."/>
            <person name="Codani J.-J."/>
            <person name="Connerton I.F."/>
            <person name="Cummings N.J."/>
            <person name="Daniel R.A."/>
            <person name="Denizot F."/>
            <person name="Devine K.M."/>
            <person name="Duesterhoeft A."/>
            <person name="Ehrlich S.D."/>
            <person name="Emmerson P.T."/>
            <person name="Entian K.-D."/>
            <person name="Errington J."/>
            <person name="Fabret C."/>
            <person name="Ferrari E."/>
            <person name="Foulger D."/>
            <person name="Fritz C."/>
            <person name="Fujita M."/>
            <person name="Fujita Y."/>
            <person name="Fuma S."/>
            <person name="Galizzi A."/>
            <person name="Galleron N."/>
            <person name="Ghim S.-Y."/>
            <person name="Glaser P."/>
            <person name="Goffeau A."/>
            <person name="Golightly E.J."/>
            <person name="Grandi G."/>
            <person name="Guiseppi G."/>
            <person name="Guy B.J."/>
            <person name="Haga K."/>
            <person name="Haiech J."/>
            <person name="Harwood C.R."/>
            <person name="Henaut A."/>
            <person name="Hilbert H."/>
            <person name="Holsappel S."/>
            <person name="Hosono S."/>
            <person name="Hullo M.-F."/>
            <person name="Itaya M."/>
            <person name="Jones L.-M."/>
            <person name="Joris B."/>
            <person name="Karamata D."/>
            <person name="Kasahara Y."/>
            <person name="Klaerr-Blanchard M."/>
            <person name="Klein C."/>
            <person name="Kobayashi Y."/>
            <person name="Koetter P."/>
            <person name="Koningstein G."/>
            <person name="Krogh S."/>
            <person name="Kumano M."/>
            <person name="Kurita K."/>
            <person name="Lapidus A."/>
            <person name="Lardinois S."/>
            <person name="Lauber J."/>
            <person name="Lazarevic V."/>
            <person name="Lee S.-M."/>
            <person name="Levine A."/>
            <person name="Liu H."/>
            <person name="Masuda S."/>
            <person name="Mauel C."/>
            <person name="Medigue C."/>
            <person name="Medina N."/>
            <person name="Mellado R.P."/>
            <person name="Mizuno M."/>
            <person name="Moestl D."/>
            <person name="Nakai S."/>
            <person name="Noback M."/>
            <person name="Noone D."/>
            <person name="O'Reilly M."/>
            <person name="Ogawa K."/>
            <person name="Ogiwara A."/>
            <person name="Oudega B."/>
            <person name="Park S.-H."/>
            <person name="Parro V."/>
            <person name="Pohl T.M."/>
            <person name="Portetelle D."/>
            <person name="Porwollik S."/>
            <person name="Prescott A.M."/>
            <person name="Presecan E."/>
            <person name="Pujic P."/>
            <person name="Purnelle B."/>
            <person name="Rapoport G."/>
            <person name="Rey M."/>
            <person name="Reynolds S."/>
            <person name="Rieger M."/>
            <person name="Rivolta C."/>
            <person name="Rocha E."/>
            <person name="Roche B."/>
            <person name="Rose M."/>
            <person name="Sadaie Y."/>
            <person name="Sato T."/>
            <person name="Scanlan E."/>
            <person name="Schleich S."/>
            <person name="Schroeter R."/>
            <person name="Scoffone F."/>
            <person name="Sekiguchi J."/>
            <person name="Sekowska A."/>
            <person name="Seror S.J."/>
            <person name="Serror P."/>
            <person name="Shin B.-S."/>
            <person name="Soldo B."/>
            <person name="Sorokin A."/>
            <person name="Tacconi E."/>
            <person name="Takagi T."/>
            <person name="Takahashi H."/>
            <person name="Takemaru K."/>
            <person name="Takeuchi M."/>
            <person name="Tamakoshi A."/>
            <person name="Tanaka T."/>
            <person name="Terpstra P."/>
            <person name="Tognoni A."/>
            <person name="Tosato V."/>
            <person name="Uchiyama S."/>
            <person name="Vandenbol M."/>
            <person name="Vannier F."/>
            <person name="Vassarotti A."/>
            <person name="Viari A."/>
            <person name="Wambutt R."/>
            <person name="Wedler E."/>
            <person name="Wedler H."/>
            <person name="Weitzenegger T."/>
            <person name="Winters P."/>
            <person name="Wipat A."/>
            <person name="Yamamoto H."/>
            <person name="Yamane K."/>
            <person name="Yasumoto K."/>
            <person name="Yata K."/>
            <person name="Yoshida K."/>
            <person name="Yoshikawa H.-F."/>
            <person name="Zumstein E."/>
            <person name="Yoshikawa H."/>
            <person name="Danchin A."/>
        </authorList>
    </citation>
    <scope>NUCLEOTIDE SEQUENCE [LARGE SCALE GENOMIC DNA]</scope>
    <source>
        <strain>168</strain>
    </source>
</reference>